<feature type="chain" id="PRO_1000206480" description="Glycerol-1-phosphate dehydrogenase [NAD(P)+]">
    <location>
        <begin position="1"/>
        <end position="351"/>
    </location>
</feature>
<feature type="binding site" evidence="1">
    <location>
        <begin position="97"/>
        <end position="101"/>
    </location>
    <ligand>
        <name>NAD(+)</name>
        <dbReference type="ChEBI" id="CHEBI:57540"/>
    </ligand>
</feature>
<feature type="binding site" evidence="1">
    <location>
        <begin position="119"/>
        <end position="122"/>
    </location>
    <ligand>
        <name>NAD(+)</name>
        <dbReference type="ChEBI" id="CHEBI:57540"/>
    </ligand>
</feature>
<feature type="binding site" evidence="1">
    <location>
        <position position="124"/>
    </location>
    <ligand>
        <name>substrate</name>
    </ligand>
</feature>
<feature type="binding site" evidence="1">
    <location>
        <position position="128"/>
    </location>
    <ligand>
        <name>NAD(+)</name>
        <dbReference type="ChEBI" id="CHEBI:57540"/>
    </ligand>
</feature>
<feature type="binding site" evidence="1">
    <location>
        <position position="171"/>
    </location>
    <ligand>
        <name>substrate</name>
    </ligand>
</feature>
<feature type="binding site" evidence="1">
    <location>
        <position position="171"/>
    </location>
    <ligand>
        <name>Zn(2+)</name>
        <dbReference type="ChEBI" id="CHEBI:29105"/>
        <note>catalytic</note>
    </ligand>
</feature>
<feature type="binding site" evidence="1">
    <location>
        <position position="251"/>
    </location>
    <ligand>
        <name>Zn(2+)</name>
        <dbReference type="ChEBI" id="CHEBI:29105"/>
        <note>catalytic</note>
    </ligand>
</feature>
<feature type="binding site" evidence="1">
    <location>
        <position position="255"/>
    </location>
    <ligand>
        <name>substrate</name>
    </ligand>
</feature>
<feature type="binding site" evidence="1">
    <location>
        <position position="267"/>
    </location>
    <ligand>
        <name>Zn(2+)</name>
        <dbReference type="ChEBI" id="CHEBI:29105"/>
        <note>catalytic</note>
    </ligand>
</feature>
<accession>C3NHE5</accession>
<gene>
    <name evidence="1" type="primary">egsA</name>
    <name type="ordered locus">YN1551_1465</name>
</gene>
<evidence type="ECO:0000255" key="1">
    <source>
        <dbReference type="HAMAP-Rule" id="MF_00497"/>
    </source>
</evidence>
<dbReference type="EC" id="1.1.1.261" evidence="1"/>
<dbReference type="EMBL" id="CP001404">
    <property type="protein sequence ID" value="ACP48555.1"/>
    <property type="molecule type" value="Genomic_DNA"/>
</dbReference>
<dbReference type="RefSeq" id="WP_012716165.1">
    <property type="nucleotide sequence ID" value="NC_012623.1"/>
</dbReference>
<dbReference type="SMR" id="C3NHE5"/>
<dbReference type="GeneID" id="7811843"/>
<dbReference type="KEGG" id="sin:YN1551_1465"/>
<dbReference type="HOGENOM" id="CLU_038362_0_0_2"/>
<dbReference type="UniPathway" id="UPA00940"/>
<dbReference type="Proteomes" id="UP000006818">
    <property type="component" value="Chromosome"/>
</dbReference>
<dbReference type="GO" id="GO:0005737">
    <property type="term" value="C:cytoplasm"/>
    <property type="evidence" value="ECO:0007669"/>
    <property type="project" value="UniProtKB-SubCell"/>
</dbReference>
<dbReference type="GO" id="GO:0106357">
    <property type="term" value="F:glycerol-1-phosphate dehydrogenase (NAD+) activity"/>
    <property type="evidence" value="ECO:0007669"/>
    <property type="project" value="RHEA"/>
</dbReference>
<dbReference type="GO" id="GO:0106358">
    <property type="term" value="F:glycerol-1-phosphate dehydrogenase (NADP+) activity"/>
    <property type="evidence" value="ECO:0007669"/>
    <property type="project" value="RHEA"/>
</dbReference>
<dbReference type="GO" id="GO:0046872">
    <property type="term" value="F:metal ion binding"/>
    <property type="evidence" value="ECO:0007669"/>
    <property type="project" value="UniProtKB-KW"/>
</dbReference>
<dbReference type="GO" id="GO:0006650">
    <property type="term" value="P:glycerophospholipid metabolic process"/>
    <property type="evidence" value="ECO:0007669"/>
    <property type="project" value="UniProtKB-UniRule"/>
</dbReference>
<dbReference type="GO" id="GO:0008654">
    <property type="term" value="P:phospholipid biosynthetic process"/>
    <property type="evidence" value="ECO:0007669"/>
    <property type="project" value="UniProtKB-KW"/>
</dbReference>
<dbReference type="CDD" id="cd08173">
    <property type="entry name" value="Gro1PDH"/>
    <property type="match status" value="1"/>
</dbReference>
<dbReference type="Gene3D" id="3.40.50.1970">
    <property type="match status" value="1"/>
</dbReference>
<dbReference type="Gene3D" id="1.20.1090.10">
    <property type="entry name" value="Dehydroquinate synthase-like - alpha domain"/>
    <property type="match status" value="1"/>
</dbReference>
<dbReference type="HAMAP" id="MF_00497_A">
    <property type="entry name" value="G1P_dehydrogenase_A"/>
    <property type="match status" value="1"/>
</dbReference>
<dbReference type="InterPro" id="IPR023002">
    <property type="entry name" value="G1P_dehydrogenase_arc"/>
</dbReference>
<dbReference type="InterPro" id="IPR032837">
    <property type="entry name" value="G1PDH"/>
</dbReference>
<dbReference type="InterPro" id="IPR016205">
    <property type="entry name" value="Glycerol_DH"/>
</dbReference>
<dbReference type="NCBIfam" id="NF002022">
    <property type="entry name" value="PRK00843.1"/>
    <property type="match status" value="1"/>
</dbReference>
<dbReference type="PANTHER" id="PTHR43616">
    <property type="entry name" value="GLYCEROL DEHYDROGENASE"/>
    <property type="match status" value="1"/>
</dbReference>
<dbReference type="PANTHER" id="PTHR43616:SF5">
    <property type="entry name" value="GLYCEROL DEHYDROGENASE 1"/>
    <property type="match status" value="1"/>
</dbReference>
<dbReference type="Pfam" id="PF13685">
    <property type="entry name" value="Fe-ADH_2"/>
    <property type="match status" value="1"/>
</dbReference>
<dbReference type="PIRSF" id="PIRSF000112">
    <property type="entry name" value="Glycerol_dehydrogenase"/>
    <property type="match status" value="1"/>
</dbReference>
<dbReference type="SUPFAM" id="SSF56796">
    <property type="entry name" value="Dehydroquinate synthase-like"/>
    <property type="match status" value="1"/>
</dbReference>
<reference key="1">
    <citation type="journal article" date="2009" name="Proc. Natl. Acad. Sci. U.S.A.">
        <title>Biogeography of the Sulfolobus islandicus pan-genome.</title>
        <authorList>
            <person name="Reno M.L."/>
            <person name="Held N.L."/>
            <person name="Fields C.J."/>
            <person name="Burke P.V."/>
            <person name="Whitaker R.J."/>
        </authorList>
    </citation>
    <scope>NUCLEOTIDE SEQUENCE [LARGE SCALE GENOMIC DNA]</scope>
    <source>
        <strain>Y.N.15.51 / Yellowstone #2</strain>
    </source>
</reference>
<organism>
    <name type="scientific">Saccharolobus islandicus (strain Y.N.15.51 / Yellowstone #2)</name>
    <name type="common">Sulfolobus islandicus</name>
    <dbReference type="NCBI Taxonomy" id="419942"/>
    <lineage>
        <taxon>Archaea</taxon>
        <taxon>Thermoproteota</taxon>
        <taxon>Thermoprotei</taxon>
        <taxon>Sulfolobales</taxon>
        <taxon>Sulfolobaceae</taxon>
        <taxon>Saccharolobus</taxon>
    </lineage>
</organism>
<protein>
    <recommendedName>
        <fullName evidence="1">Glycerol-1-phosphate dehydrogenase [NAD(P)+]</fullName>
        <shortName evidence="1">G1P dehydrogenase</shortName>
        <shortName evidence="1">G1PDH</shortName>
        <ecNumber evidence="1">1.1.1.261</ecNumber>
    </recommendedName>
    <alternativeName>
        <fullName evidence="1">Enantiomeric glycerophosphate synthase</fullName>
    </alternativeName>
    <alternativeName>
        <fullName evidence="1">sn-glycerol-1-phosphate dehydrogenase</fullName>
    </alternativeName>
</protein>
<comment type="function">
    <text evidence="1">Catalyzes the NAD(P)H-dependent reduction of dihydroxyacetonephosphate (DHAP or glycerone phosphate) to glycerol 1-phosphate (G1P). The G1P thus generated is used as the glycerophosphate backbone of phospholipids in the cellular membranes of Archaea.</text>
</comment>
<comment type="catalytic activity">
    <reaction evidence="1">
        <text>sn-glycerol 1-phosphate + NAD(+) = dihydroxyacetone phosphate + NADH + H(+)</text>
        <dbReference type="Rhea" id="RHEA:21412"/>
        <dbReference type="ChEBI" id="CHEBI:15378"/>
        <dbReference type="ChEBI" id="CHEBI:57540"/>
        <dbReference type="ChEBI" id="CHEBI:57642"/>
        <dbReference type="ChEBI" id="CHEBI:57685"/>
        <dbReference type="ChEBI" id="CHEBI:57945"/>
        <dbReference type="EC" id="1.1.1.261"/>
    </reaction>
</comment>
<comment type="catalytic activity">
    <reaction evidence="1">
        <text>sn-glycerol 1-phosphate + NADP(+) = dihydroxyacetone phosphate + NADPH + H(+)</text>
        <dbReference type="Rhea" id="RHEA:21416"/>
        <dbReference type="ChEBI" id="CHEBI:15378"/>
        <dbReference type="ChEBI" id="CHEBI:57642"/>
        <dbReference type="ChEBI" id="CHEBI:57685"/>
        <dbReference type="ChEBI" id="CHEBI:57783"/>
        <dbReference type="ChEBI" id="CHEBI:58349"/>
        <dbReference type="EC" id="1.1.1.261"/>
    </reaction>
</comment>
<comment type="cofactor">
    <cofactor evidence="1">
        <name>Zn(2+)</name>
        <dbReference type="ChEBI" id="CHEBI:29105"/>
    </cofactor>
    <text evidence="1">Binds 1 zinc ion per subunit.</text>
</comment>
<comment type="pathway">
    <text evidence="1">Membrane lipid metabolism; glycerophospholipid metabolism.</text>
</comment>
<comment type="subunit">
    <text evidence="1">Homodimer.</text>
</comment>
<comment type="subcellular location">
    <subcellularLocation>
        <location evidence="1">Cytoplasm</location>
    </subcellularLocation>
</comment>
<comment type="similarity">
    <text evidence="1">Belongs to the glycerol-1-phosphate dehydrogenase family.</text>
</comment>
<proteinExistence type="inferred from homology"/>
<name>G1PDH_SACI1</name>
<keyword id="KW-0963">Cytoplasm</keyword>
<keyword id="KW-0444">Lipid biosynthesis</keyword>
<keyword id="KW-0443">Lipid metabolism</keyword>
<keyword id="KW-0479">Metal-binding</keyword>
<keyword id="KW-0520">NAD</keyword>
<keyword id="KW-0521">NADP</keyword>
<keyword id="KW-0560">Oxidoreductase</keyword>
<keyword id="KW-0594">Phospholipid biosynthesis</keyword>
<keyword id="KW-1208">Phospholipid metabolism</keyword>
<keyword id="KW-0862">Zinc</keyword>
<sequence>MNVKEHVISLPRRVFVGHDIIYDISIYFSQLGITSPFLIVTGTKYTKKIADRVIENLPKNAKYEVIEIDTATLDDVYKVEEVVKKVNPNILLGIGGGKVIDVTKYAAFRNNLEFVSIPTSPSHDGITSPFASIKGLQKPVSVKAKEPLAIIADIEILSLSPRRLINAGIGDTIGKIIAVRDWRLAAKLRGEYYGDYTASLALMSAKHAFQCTKIINKDIKYGVRMLIEALISSGVAMGMAGSTRPASGSEHLFAHAVELLHPEGVLHGELVGLGTIIMAYLHGINWKIIRDRLKKIGFPVKAKDLGLSDEEVIKALTIAHTIRPERYTILGDRGLTWSSAEKIARVTKIID</sequence>